<keyword id="KW-1003">Cell membrane</keyword>
<keyword id="KW-0202">Cytokine</keyword>
<keyword id="KW-1015">Disulfide bond</keyword>
<keyword id="KW-0472">Membrane</keyword>
<keyword id="KW-1185">Reference proteome</keyword>
<keyword id="KW-0964">Secreted</keyword>
<keyword id="KW-0732">Signal</keyword>
<gene>
    <name evidence="6 8" type="primary">alkal1</name>
    <name evidence="8" type="ORF">si:dkey-30h22.10</name>
</gene>
<evidence type="ECO:0000250" key="1">
    <source>
        <dbReference type="UniProtKB" id="Q6UXT8"/>
    </source>
</evidence>
<evidence type="ECO:0000255" key="2"/>
<evidence type="ECO:0000269" key="3">
    <source>
    </source>
</evidence>
<evidence type="ECO:0000269" key="4">
    <source>
    </source>
</evidence>
<evidence type="ECO:0000303" key="5">
    <source>
    </source>
</evidence>
<evidence type="ECO:0000303" key="6">
    <source>
    </source>
</evidence>
<evidence type="ECO:0000305" key="7"/>
<evidence type="ECO:0000312" key="8">
    <source>
        <dbReference type="ZFIN" id="ZDB-GENE-110411-243"/>
    </source>
</evidence>
<proteinExistence type="evidence at transcript level"/>
<dbReference type="EMBL" id="AL844185">
    <property type="status" value="NOT_ANNOTATED_CDS"/>
    <property type="molecule type" value="Genomic_DNA"/>
</dbReference>
<dbReference type="RefSeq" id="NP_001410784.1">
    <property type="nucleotide sequence ID" value="NM_001423855.1"/>
</dbReference>
<dbReference type="RefSeq" id="XP_003199108.1">
    <property type="nucleotide sequence ID" value="XM_003199060.4"/>
</dbReference>
<dbReference type="RefSeq" id="XP_068078950.1">
    <property type="nucleotide sequence ID" value="XM_068222849.1"/>
</dbReference>
<dbReference type="SMR" id="F8W2C9"/>
<dbReference type="FunCoup" id="F8W2C9">
    <property type="interactions" value="35"/>
</dbReference>
<dbReference type="PaxDb" id="7955-ENSDARP00000124157"/>
<dbReference type="Ensembl" id="ENSDART00000148958">
    <property type="protein sequence ID" value="ENSDARP00000124774"/>
    <property type="gene ID" value="ENSDARG00000074387"/>
</dbReference>
<dbReference type="Ensembl" id="ENSDART00000149860">
    <property type="protein sequence ID" value="ENSDARP00000124157"/>
    <property type="gene ID" value="ENSDARG00000074387"/>
</dbReference>
<dbReference type="GeneID" id="100535009"/>
<dbReference type="AGR" id="ZFIN:ZDB-GENE-110411-243"/>
<dbReference type="ZFIN" id="ZDB-GENE-110411-243">
    <property type="gene designation" value="alkal1"/>
</dbReference>
<dbReference type="eggNOG" id="ENOG502RZG1">
    <property type="taxonomic scope" value="Eukaryota"/>
</dbReference>
<dbReference type="HOGENOM" id="CLU_120534_0_0_1"/>
<dbReference type="OrthoDB" id="9807651at2759"/>
<dbReference type="PhylomeDB" id="F8W2C9"/>
<dbReference type="TreeFam" id="TF333390"/>
<dbReference type="Reactome" id="R-DRE-201556">
    <property type="pathway name" value="Signaling by ALK"/>
</dbReference>
<dbReference type="Reactome" id="R-DRE-9842663">
    <property type="pathway name" value="Signaling by LTK"/>
</dbReference>
<dbReference type="PRO" id="PR:F8W2C9"/>
<dbReference type="Proteomes" id="UP000000437">
    <property type="component" value="Chromosome 8"/>
</dbReference>
<dbReference type="Bgee" id="ENSDARG00000074387">
    <property type="expression patterns" value="Expressed in retina and 7 other cell types or tissues"/>
</dbReference>
<dbReference type="ExpressionAtlas" id="F8W2C9">
    <property type="expression patterns" value="baseline"/>
</dbReference>
<dbReference type="GO" id="GO:0005615">
    <property type="term" value="C:extracellular space"/>
    <property type="evidence" value="ECO:0007669"/>
    <property type="project" value="UniProtKB-KW"/>
</dbReference>
<dbReference type="GO" id="GO:0005886">
    <property type="term" value="C:plasma membrane"/>
    <property type="evidence" value="ECO:0007669"/>
    <property type="project" value="UniProtKB-SubCell"/>
</dbReference>
<dbReference type="GO" id="GO:0005125">
    <property type="term" value="F:cytokine activity"/>
    <property type="evidence" value="ECO:0000314"/>
    <property type="project" value="UniProtKB"/>
</dbReference>
<dbReference type="GO" id="GO:0030298">
    <property type="term" value="F:receptor signaling protein tyrosine kinase activator activity"/>
    <property type="evidence" value="ECO:0000314"/>
    <property type="project" value="UniProtKB"/>
</dbReference>
<dbReference type="GO" id="GO:0030971">
    <property type="term" value="F:receptor tyrosine kinase binding"/>
    <property type="evidence" value="ECO:0000318"/>
    <property type="project" value="GO_Central"/>
</dbReference>
<dbReference type="GO" id="GO:0050935">
    <property type="term" value="P:iridophore differentiation"/>
    <property type="evidence" value="ECO:0000315"/>
    <property type="project" value="ZFIN"/>
</dbReference>
<dbReference type="GO" id="GO:0070374">
    <property type="term" value="P:positive regulation of ERK1 and ERK2 cascade"/>
    <property type="evidence" value="ECO:0000318"/>
    <property type="project" value="GO_Central"/>
</dbReference>
<dbReference type="GO" id="GO:0070378">
    <property type="term" value="P:positive regulation of ERK5 cascade"/>
    <property type="evidence" value="ECO:0000318"/>
    <property type="project" value="GO_Central"/>
</dbReference>
<dbReference type="InterPro" id="IPR029364">
    <property type="entry name" value="ALKL1/2"/>
</dbReference>
<dbReference type="PANTHER" id="PTHR28676:SF1">
    <property type="entry name" value="ALK AND LTK LIGAND 1"/>
    <property type="match status" value="1"/>
</dbReference>
<dbReference type="PANTHER" id="PTHR28676">
    <property type="entry name" value="ALK AND LTK LIGAND 2-RELATED"/>
    <property type="match status" value="1"/>
</dbReference>
<dbReference type="Pfam" id="PF15129">
    <property type="entry name" value="ALKL1_2"/>
    <property type="match status" value="1"/>
</dbReference>
<sequence length="152" mass="17607">MRAEKRWHILLSMILLLITSSQCMDSKEVKESERKTLLNLILQVIGEKPASRRVTSGLYSVSQDAKFSSRENTAHLPKPDNSRPIEIVPRDTSMKDKFIEHFTAGPVKFPSECRTHFHRIYHNTRDCSRPTYYKRCARLLTRLAMSPLCTQS</sequence>
<protein>
    <recommendedName>
        <fullName evidence="6">ALK and LTK ligand 1</fullName>
    </recommendedName>
    <alternativeName>
        <fullName evidence="5">Augmentor beta</fullName>
        <shortName evidence="5">AUG-beta</shortName>
    </alternativeName>
</protein>
<accession>F8W2C9</accession>
<organism>
    <name type="scientific">Danio rerio</name>
    <name type="common">Zebrafish</name>
    <name type="synonym">Brachydanio rerio</name>
    <dbReference type="NCBI Taxonomy" id="7955"/>
    <lineage>
        <taxon>Eukaryota</taxon>
        <taxon>Metazoa</taxon>
        <taxon>Chordata</taxon>
        <taxon>Craniata</taxon>
        <taxon>Vertebrata</taxon>
        <taxon>Euteleostomi</taxon>
        <taxon>Actinopterygii</taxon>
        <taxon>Neopterygii</taxon>
        <taxon>Teleostei</taxon>
        <taxon>Ostariophysi</taxon>
        <taxon>Cypriniformes</taxon>
        <taxon>Danionidae</taxon>
        <taxon>Danioninae</taxon>
        <taxon>Danio</taxon>
    </lineage>
</organism>
<feature type="signal peptide" evidence="2">
    <location>
        <begin position="1"/>
        <end position="23"/>
    </location>
</feature>
<feature type="chain" id="PRO_5015091373" description="ALK and LTK ligand 1">
    <location>
        <begin position="24"/>
        <end position="152"/>
    </location>
</feature>
<feature type="disulfide bond" evidence="1">
    <location>
        <begin position="113"/>
        <end position="149"/>
    </location>
</feature>
<feature type="disulfide bond" evidence="1">
    <location>
        <begin position="127"/>
        <end position="136"/>
    </location>
</feature>
<reference key="1">
    <citation type="journal article" date="2013" name="Nature">
        <title>The zebrafish reference genome sequence and its relationship to the human genome.</title>
        <authorList>
            <person name="Howe K."/>
            <person name="Clark M.D."/>
            <person name="Torroja C.F."/>
            <person name="Torrance J."/>
            <person name="Berthelot C."/>
            <person name="Muffato M."/>
            <person name="Collins J.E."/>
            <person name="Humphray S."/>
            <person name="McLaren K."/>
            <person name="Matthews L."/>
            <person name="McLaren S."/>
            <person name="Sealy I."/>
            <person name="Caccamo M."/>
            <person name="Churcher C."/>
            <person name="Scott C."/>
            <person name="Barrett J.C."/>
            <person name="Koch R."/>
            <person name="Rauch G.J."/>
            <person name="White S."/>
            <person name="Chow W."/>
            <person name="Kilian B."/>
            <person name="Quintais L.T."/>
            <person name="Guerra-Assuncao J.A."/>
            <person name="Zhou Y."/>
            <person name="Gu Y."/>
            <person name="Yen J."/>
            <person name="Vogel J.H."/>
            <person name="Eyre T."/>
            <person name="Redmond S."/>
            <person name="Banerjee R."/>
            <person name="Chi J."/>
            <person name="Fu B."/>
            <person name="Langley E."/>
            <person name="Maguire S.F."/>
            <person name="Laird G.K."/>
            <person name="Lloyd D."/>
            <person name="Kenyon E."/>
            <person name="Donaldson S."/>
            <person name="Sehra H."/>
            <person name="Almeida-King J."/>
            <person name="Loveland J."/>
            <person name="Trevanion S."/>
            <person name="Jones M."/>
            <person name="Quail M."/>
            <person name="Willey D."/>
            <person name="Hunt A."/>
            <person name="Burton J."/>
            <person name="Sims S."/>
            <person name="McLay K."/>
            <person name="Plumb B."/>
            <person name="Davis J."/>
            <person name="Clee C."/>
            <person name="Oliver K."/>
            <person name="Clark R."/>
            <person name="Riddle C."/>
            <person name="Elliot D."/>
            <person name="Threadgold G."/>
            <person name="Harden G."/>
            <person name="Ware D."/>
            <person name="Begum S."/>
            <person name="Mortimore B."/>
            <person name="Kerry G."/>
            <person name="Heath P."/>
            <person name="Phillimore B."/>
            <person name="Tracey A."/>
            <person name="Corby N."/>
            <person name="Dunn M."/>
            <person name="Johnson C."/>
            <person name="Wood J."/>
            <person name="Clark S."/>
            <person name="Pelan S."/>
            <person name="Griffiths G."/>
            <person name="Smith M."/>
            <person name="Glithero R."/>
            <person name="Howden P."/>
            <person name="Barker N."/>
            <person name="Lloyd C."/>
            <person name="Stevens C."/>
            <person name="Harley J."/>
            <person name="Holt K."/>
            <person name="Panagiotidis G."/>
            <person name="Lovell J."/>
            <person name="Beasley H."/>
            <person name="Henderson C."/>
            <person name="Gordon D."/>
            <person name="Auger K."/>
            <person name="Wright D."/>
            <person name="Collins J."/>
            <person name="Raisen C."/>
            <person name="Dyer L."/>
            <person name="Leung K."/>
            <person name="Robertson L."/>
            <person name="Ambridge K."/>
            <person name="Leongamornlert D."/>
            <person name="McGuire S."/>
            <person name="Gilderthorp R."/>
            <person name="Griffiths C."/>
            <person name="Manthravadi D."/>
            <person name="Nichol S."/>
            <person name="Barker G."/>
            <person name="Whitehead S."/>
            <person name="Kay M."/>
            <person name="Brown J."/>
            <person name="Murnane C."/>
            <person name="Gray E."/>
            <person name="Humphries M."/>
            <person name="Sycamore N."/>
            <person name="Barker D."/>
            <person name="Saunders D."/>
            <person name="Wallis J."/>
            <person name="Babbage A."/>
            <person name="Hammond S."/>
            <person name="Mashreghi-Mohammadi M."/>
            <person name="Barr L."/>
            <person name="Martin S."/>
            <person name="Wray P."/>
            <person name="Ellington A."/>
            <person name="Matthews N."/>
            <person name="Ellwood M."/>
            <person name="Woodmansey R."/>
            <person name="Clark G."/>
            <person name="Cooper J."/>
            <person name="Tromans A."/>
            <person name="Grafham D."/>
            <person name="Skuce C."/>
            <person name="Pandian R."/>
            <person name="Andrews R."/>
            <person name="Harrison E."/>
            <person name="Kimberley A."/>
            <person name="Garnett J."/>
            <person name="Fosker N."/>
            <person name="Hall R."/>
            <person name="Garner P."/>
            <person name="Kelly D."/>
            <person name="Bird C."/>
            <person name="Palmer S."/>
            <person name="Gehring I."/>
            <person name="Berger A."/>
            <person name="Dooley C.M."/>
            <person name="Ersan-Urun Z."/>
            <person name="Eser C."/>
            <person name="Geiger H."/>
            <person name="Geisler M."/>
            <person name="Karotki L."/>
            <person name="Kirn A."/>
            <person name="Konantz J."/>
            <person name="Konantz M."/>
            <person name="Oberlander M."/>
            <person name="Rudolph-Geiger S."/>
            <person name="Teucke M."/>
            <person name="Lanz C."/>
            <person name="Raddatz G."/>
            <person name="Osoegawa K."/>
            <person name="Zhu B."/>
            <person name="Rapp A."/>
            <person name="Widaa S."/>
            <person name="Langford C."/>
            <person name="Yang F."/>
            <person name="Schuster S.C."/>
            <person name="Carter N.P."/>
            <person name="Harrow J."/>
            <person name="Ning Z."/>
            <person name="Herrero J."/>
            <person name="Searle S.M."/>
            <person name="Enright A."/>
            <person name="Geisler R."/>
            <person name="Plasterk R.H."/>
            <person name="Lee C."/>
            <person name="Westerfield M."/>
            <person name="de Jong P.J."/>
            <person name="Zon L.I."/>
            <person name="Postlethwait J.H."/>
            <person name="Nusslein-Volhard C."/>
            <person name="Hubbard T.J."/>
            <person name="Roest Crollius H."/>
            <person name="Rogers J."/>
            <person name="Stemple D.L."/>
        </authorList>
    </citation>
    <scope>NUCLEOTIDE SEQUENCE [LARGE SCALE GENOMIC DNA]</scope>
    <source>
        <strain>Tuebingen</strain>
    </source>
</reference>
<reference key="2">
    <citation type="journal article" date="2017" name="Proc. Natl. Acad. Sci. U.S.A.">
        <title>Alk and Ltk ligands are essential for iridophore development in zebrafish mediated by the receptor tyrosine kinase Ltk.</title>
        <authorList>
            <person name="Mo E.S."/>
            <person name="Cheng Q."/>
            <person name="Reshetnyak A.V."/>
            <person name="Schlessinger J."/>
            <person name="Nicoli S."/>
        </authorList>
    </citation>
    <scope>FUNCTION</scope>
</reference>
<reference key="3">
    <citation type="journal article" date="2018" name="Proc. Natl. Acad. Sci. U.S.A.">
        <title>ALKALs are in vivo ligands for ALK family receptor tyrosine kinases in the neural crest and derived cells.</title>
        <authorList>
            <person name="Fadeev A."/>
            <person name="Mendoza-Garcia P."/>
            <person name="Irion U."/>
            <person name="Guan J."/>
            <person name="Pfeifer K."/>
            <person name="Wiessner S."/>
            <person name="Serluca F."/>
            <person name="Singh A.P."/>
            <person name="Nuesslein-Volhard C."/>
            <person name="Palmer R.H."/>
        </authorList>
    </citation>
    <scope>FUNCTION</scope>
    <scope>TISSUE SPECIFICITY</scope>
    <scope>DISRUPTION PHENOTYPE</scope>
</reference>
<comment type="function">
    <text evidence="3 4">Cytokine that acts as a physiological ligand for receptor tyrosine kinases LTK and ALK (PubMed:29078341, PubMed:29317532). Required for iridophore development in the adult eye by acting as a receptor for LTK (PubMed:29078341).</text>
</comment>
<comment type="subcellular location">
    <subcellularLocation>
        <location evidence="2">Secreted</location>
    </subcellularLocation>
    <subcellularLocation>
        <location evidence="1">Cell membrane</location>
    </subcellularLocation>
</comment>
<comment type="tissue specificity">
    <text evidence="4">Expressed at low level in the notochord and iridophore stripes, the eye and the swim bladder.</text>
</comment>
<comment type="disruption phenotype">
    <text evidence="4">Fishes show reduced iridophores in eyes and operculum, with no detectable phenotype in the trunk (PubMed:29317532). Fishes lacking both alkal1 and alkal2b show a complete loss of eye iridophores (PubMed:29317532). Fishes lacking alkal1, alkal2a and alkal2b are embryonic lethal and display total loss of iridophores (PubMed:29317532).</text>
</comment>
<comment type="similarity">
    <text evidence="7">Belongs to the ALKAL family.</text>
</comment>
<name>ALKL1_DANRE</name>